<feature type="signal peptide" evidence="2">
    <location>
        <begin position="1"/>
        <end position="20"/>
    </location>
</feature>
<feature type="chain" id="PRO_0000407785" description="Maintenance of telomere capping protein 6">
    <location>
        <begin position="21"/>
        <end position="526"/>
    </location>
</feature>
<feature type="topological domain" description="Extracellular" evidence="2">
    <location>
        <begin position="21"/>
        <end position="477"/>
    </location>
</feature>
<feature type="transmembrane region" description="Helical" evidence="2">
    <location>
        <begin position="478"/>
        <end position="498"/>
    </location>
</feature>
<feature type="topological domain" description="Cytoplasmic" evidence="2">
    <location>
        <begin position="499"/>
        <end position="526"/>
    </location>
</feature>
<feature type="glycosylation site" description="N-linked (GlcNAc...) asparagine" evidence="2">
    <location>
        <position position="32"/>
    </location>
</feature>
<feature type="glycosylation site" description="N-linked (GlcNAc...) asparagine" evidence="2">
    <location>
        <position position="60"/>
    </location>
</feature>
<feature type="glycosylation site" description="N-linked (GlcNAc...) asparagine" evidence="2">
    <location>
        <position position="80"/>
    </location>
</feature>
<feature type="glycosylation site" description="N-linked (GlcNAc...) asparagine" evidence="2">
    <location>
        <position position="89"/>
    </location>
</feature>
<feature type="glycosylation site" description="N-linked (GlcNAc...) asparagine" evidence="2">
    <location>
        <position position="156"/>
    </location>
</feature>
<feature type="glycosylation site" description="N-linked (GlcNAc...) asparagine" evidence="2">
    <location>
        <position position="171"/>
    </location>
</feature>
<feature type="glycosylation site" description="N-linked (GlcNAc...) asparagine" evidence="2">
    <location>
        <position position="175"/>
    </location>
</feature>
<feature type="glycosylation site" description="N-linked (GlcNAc...) asparagine" evidence="2">
    <location>
        <position position="202"/>
    </location>
</feature>
<feature type="glycosylation site" description="N-linked (GlcNAc...) asparagine" evidence="2">
    <location>
        <position position="240"/>
    </location>
</feature>
<feature type="glycosylation site" description="N-linked (GlcNAc...) asparagine" evidence="2">
    <location>
        <position position="259"/>
    </location>
</feature>
<feature type="glycosylation site" description="N-linked (GlcNAc...) asparagine" evidence="2">
    <location>
        <position position="311"/>
    </location>
</feature>
<feature type="glycosylation site" description="N-linked (GlcNAc...) asparagine" evidence="2">
    <location>
        <position position="362"/>
    </location>
</feature>
<feature type="glycosylation site" description="N-linked (GlcNAc...) asparagine" evidence="2">
    <location>
        <position position="433"/>
    </location>
</feature>
<organism>
    <name type="scientific">Saccharomyces cerevisiae (strain RM11-1a)</name>
    <name type="common">Baker's yeast</name>
    <dbReference type="NCBI Taxonomy" id="285006"/>
    <lineage>
        <taxon>Eukaryota</taxon>
        <taxon>Fungi</taxon>
        <taxon>Dikarya</taxon>
        <taxon>Ascomycota</taxon>
        <taxon>Saccharomycotina</taxon>
        <taxon>Saccharomycetes</taxon>
        <taxon>Saccharomycetales</taxon>
        <taxon>Saccharomycetaceae</taxon>
        <taxon>Saccharomyces</taxon>
    </lineage>
</organism>
<sequence>MWILIYLFIIWSSLRTWVTAVDSTTTVGDDLNETVSTSVWPTMSPQMTVAFRSQRDVMGNLTIDQLPYVGLNLRRVLLNNETSMVNEGNNTRLLTLFKSMLSSEANAFVLDLEQYNNDLRVVDTTLLFSDVLIALQSFIFSTQNNLYANIIVLLLNISAPELDSTEYRHQNQTLNTTYILDKNLGNSFIYKPTDLQSDRAKNNTWNIYGKSSIDGWPTLGSVLYEQKKRLVIGELTDFFNETTAPYIFPHDVFHYEQGNSTLDCPSTVEGLTDLSSIHWRFLDSLFNSVDIKEYISCGLSPIISNSAYVNNVTQLADIIHEGSVWSWDSDQPSVTQSTSKSGSSSGTLEAYNCVLLYYFANNETVTWRVGNCYNSNIGLCRYENMAFRWLVRSNKATYFDFDSYQGSKCPDQYSFNIPRSPLEQRSFIAYMRNSSFSDTQIWIDLNSISVSNCWVSGGPYASCPYEKVISRRNFVTMMVPASVCSFALLCIVVYLSVLRVPIYDNRKNWRRVINKISKSELEGVPS</sequence>
<dbReference type="EMBL" id="CH408053">
    <property type="protein sequence ID" value="EDV09196.1"/>
    <property type="molecule type" value="Genomic_DNA"/>
</dbReference>
<dbReference type="GlyCosmos" id="B3LSR5">
    <property type="glycosylation" value="13 sites, No reported glycans"/>
</dbReference>
<dbReference type="HOGENOM" id="CLU_033723_0_0_1"/>
<dbReference type="OrthoDB" id="38991at4893"/>
<dbReference type="Proteomes" id="UP000008335">
    <property type="component" value="Unassembled WGS sequence"/>
</dbReference>
<dbReference type="GO" id="GO:0016020">
    <property type="term" value="C:membrane"/>
    <property type="evidence" value="ECO:0007669"/>
    <property type="project" value="UniProtKB-SubCell"/>
</dbReference>
<dbReference type="InterPro" id="IPR051008">
    <property type="entry name" value="Telomere_Capping_Maintenance"/>
</dbReference>
<dbReference type="PANTHER" id="PTHR35518:SF2">
    <property type="entry name" value="MAINTENANCE OF TELOMERE CAPPING PROTEIN 6"/>
    <property type="match status" value="1"/>
</dbReference>
<dbReference type="PANTHER" id="PTHR35518">
    <property type="entry name" value="MAINTENANCE OF TELOMOERE CAPPING"/>
    <property type="match status" value="1"/>
</dbReference>
<dbReference type="Pfam" id="PF25506">
    <property type="entry name" value="TIM-barrel_MTC6"/>
    <property type="match status" value="1"/>
</dbReference>
<accession>B3LSR5</accession>
<comment type="function">
    <text evidence="1">May be involved in telomere capping.</text>
</comment>
<comment type="subcellular location">
    <subcellularLocation>
        <location evidence="3">Membrane</location>
        <topology evidence="3">Single-pass type I membrane protein</topology>
    </subcellularLocation>
</comment>
<comment type="similarity">
    <text evidence="3">Belongs to the MTC6 family.</text>
</comment>
<proteinExistence type="inferred from homology"/>
<name>MTC6_YEAS1</name>
<evidence type="ECO:0000250" key="1"/>
<evidence type="ECO:0000255" key="2"/>
<evidence type="ECO:0000305" key="3"/>
<protein>
    <recommendedName>
        <fullName>Maintenance of telomere capping protein 6</fullName>
    </recommendedName>
</protein>
<reference key="1">
    <citation type="submission" date="2005-03" db="EMBL/GenBank/DDBJ databases">
        <title>Annotation of the Saccharomyces cerevisiae RM11-1a genome.</title>
        <authorList>
            <consortium name="The Broad Institute Genome Sequencing Platform"/>
            <person name="Birren B.W."/>
            <person name="Lander E.S."/>
            <person name="Galagan J.E."/>
            <person name="Nusbaum C."/>
            <person name="Devon K."/>
            <person name="Cuomo C."/>
            <person name="Jaffe D.B."/>
            <person name="Butler J."/>
            <person name="Alvarez P."/>
            <person name="Gnerre S."/>
            <person name="Grabherr M."/>
            <person name="Kleber M."/>
            <person name="Mauceli E.W."/>
            <person name="Brockman W."/>
            <person name="MacCallum I.A."/>
            <person name="Rounsley S."/>
            <person name="Young S.K."/>
            <person name="LaButti K."/>
            <person name="Pushparaj V."/>
            <person name="DeCaprio D."/>
            <person name="Crawford M."/>
            <person name="Koehrsen M."/>
            <person name="Engels R."/>
            <person name="Montgomery P."/>
            <person name="Pearson M."/>
            <person name="Howarth C."/>
            <person name="Larson L."/>
            <person name="Luoma S."/>
            <person name="White J."/>
            <person name="O'Leary S."/>
            <person name="Kodira C.D."/>
            <person name="Zeng Q."/>
            <person name="Yandava C."/>
            <person name="Alvarado L."/>
            <person name="Pratt S."/>
            <person name="Kruglyak L."/>
        </authorList>
    </citation>
    <scope>NUCLEOTIDE SEQUENCE [LARGE SCALE GENOMIC DNA]</scope>
    <source>
        <strain>RM11-1a</strain>
    </source>
</reference>
<gene>
    <name type="primary">MTC6</name>
    <name type="ORF">SCRG_04863</name>
</gene>
<keyword id="KW-0325">Glycoprotein</keyword>
<keyword id="KW-0472">Membrane</keyword>
<keyword id="KW-0732">Signal</keyword>
<keyword id="KW-0812">Transmembrane</keyword>
<keyword id="KW-1133">Transmembrane helix</keyword>